<accession>A2D5Y4</accession>
<keyword id="KW-0217">Developmental protein</keyword>
<keyword id="KW-0238">DNA-binding</keyword>
<keyword id="KW-0371">Homeobox</keyword>
<keyword id="KW-0539">Nucleus</keyword>
<keyword id="KW-0804">Transcription</keyword>
<keyword id="KW-0805">Transcription regulation</keyword>
<comment type="function">
    <text evidence="1">Sequence-specific transcription factor which is part of a developmental regulatory system that provides cells with specific positional identities on the anterior-posterior axis. Also binds to its own promoter. Binds specifically to the motif 5'-CYYNATTA[TG]Y-3' (By similarity).</text>
</comment>
<comment type="subunit">
    <text evidence="2">Forms a DNA-binding heterodimer with transcription factor PBX1.</text>
</comment>
<comment type="subcellular location">
    <subcellularLocation>
        <location evidence="3">Nucleus</location>
    </subcellularLocation>
</comment>
<comment type="similarity">
    <text evidence="5">Belongs to the Antp homeobox family.</text>
</comment>
<gene>
    <name type="primary">HOXA5</name>
</gene>
<sequence length="270" mass="29297">MSSYFVNSFCGRYPNGPDYQLHNYGDHSSVSEQFRDSASMHSGRYGYGYNGMDLSVGRSGSGHFGSGERARSYAAGATTAPAEPRYSQPATSTHSPPPDPLPCSAVAPSPGSDSHHGGKNSLGNSSGASANAGSTHISSREGVGTASGAEEDAPASSEQASAQSEPSPAPPAQPQIYPWMRKLHISHDNIGGPEGKRARTAYTRYQTLELEKEFHFNRYLTRRRRIEIAHALCLSERQIKIWFQNRRMKWKKDNKLKSMSMAAAGGAFRP</sequence>
<feature type="chain" id="PRO_0000285419" description="Homeobox protein Hox-A5">
    <location>
        <begin position="1"/>
        <end position="270"/>
    </location>
</feature>
<feature type="DNA-binding region" description="Homeobox" evidence="3">
    <location>
        <begin position="195"/>
        <end position="254"/>
    </location>
</feature>
<feature type="region of interest" description="Disordered" evidence="4">
    <location>
        <begin position="60"/>
        <end position="175"/>
    </location>
</feature>
<feature type="short sequence motif" description="Antp-type hexapeptide">
    <location>
        <begin position="176"/>
        <end position="181"/>
    </location>
</feature>
<feature type="compositionally biased region" description="Low complexity" evidence="4">
    <location>
        <begin position="119"/>
        <end position="134"/>
    </location>
</feature>
<feature type="compositionally biased region" description="Low complexity" evidence="4">
    <location>
        <begin position="154"/>
        <end position="166"/>
    </location>
</feature>
<evidence type="ECO:0000250" key="1"/>
<evidence type="ECO:0000250" key="2">
    <source>
        <dbReference type="UniProtKB" id="P20719"/>
    </source>
</evidence>
<evidence type="ECO:0000255" key="3">
    <source>
        <dbReference type="PROSITE-ProRule" id="PRU00108"/>
    </source>
</evidence>
<evidence type="ECO:0000256" key="4">
    <source>
        <dbReference type="SAM" id="MobiDB-lite"/>
    </source>
</evidence>
<evidence type="ECO:0000305" key="5"/>
<organism>
    <name type="scientific">Lemur catta</name>
    <name type="common">Ring-tailed lemur</name>
    <dbReference type="NCBI Taxonomy" id="9447"/>
    <lineage>
        <taxon>Eukaryota</taxon>
        <taxon>Metazoa</taxon>
        <taxon>Chordata</taxon>
        <taxon>Craniata</taxon>
        <taxon>Vertebrata</taxon>
        <taxon>Euteleostomi</taxon>
        <taxon>Mammalia</taxon>
        <taxon>Eutheria</taxon>
        <taxon>Euarchontoglires</taxon>
        <taxon>Primates</taxon>
        <taxon>Strepsirrhini</taxon>
        <taxon>Lemuriformes</taxon>
        <taxon>Lemuridae</taxon>
        <taxon>Lemur</taxon>
    </lineage>
</organism>
<proteinExistence type="inferred from homology"/>
<dbReference type="EMBL" id="DQ976822">
    <property type="protein sequence ID" value="ABM68948.1"/>
    <property type="molecule type" value="Genomic_DNA"/>
</dbReference>
<dbReference type="SMR" id="A2D5Y4"/>
<dbReference type="GO" id="GO:0005634">
    <property type="term" value="C:nucleus"/>
    <property type="evidence" value="ECO:0007669"/>
    <property type="project" value="UniProtKB-SubCell"/>
</dbReference>
<dbReference type="GO" id="GO:0000981">
    <property type="term" value="F:DNA-binding transcription factor activity, RNA polymerase II-specific"/>
    <property type="evidence" value="ECO:0007669"/>
    <property type="project" value="InterPro"/>
</dbReference>
<dbReference type="GO" id="GO:0000978">
    <property type="term" value="F:RNA polymerase II cis-regulatory region sequence-specific DNA binding"/>
    <property type="evidence" value="ECO:0007669"/>
    <property type="project" value="TreeGrafter"/>
</dbReference>
<dbReference type="GO" id="GO:0009952">
    <property type="term" value="P:anterior/posterior pattern specification"/>
    <property type="evidence" value="ECO:0007669"/>
    <property type="project" value="TreeGrafter"/>
</dbReference>
<dbReference type="CDD" id="cd00086">
    <property type="entry name" value="homeodomain"/>
    <property type="match status" value="1"/>
</dbReference>
<dbReference type="FunFam" id="1.10.10.60:FF:000055">
    <property type="entry name" value="Homeobox protein Hox-A5"/>
    <property type="match status" value="1"/>
</dbReference>
<dbReference type="Gene3D" id="1.10.10.60">
    <property type="entry name" value="Homeodomain-like"/>
    <property type="match status" value="1"/>
</dbReference>
<dbReference type="InterPro" id="IPR050296">
    <property type="entry name" value="Antp_homeobox"/>
</dbReference>
<dbReference type="InterPro" id="IPR001356">
    <property type="entry name" value="HD"/>
</dbReference>
<dbReference type="InterPro" id="IPR020479">
    <property type="entry name" value="HD_metazoa"/>
</dbReference>
<dbReference type="InterPro" id="IPR017995">
    <property type="entry name" value="Homeobox_antennapedia"/>
</dbReference>
<dbReference type="InterPro" id="IPR001827">
    <property type="entry name" value="Homeobox_Antennapedia_CS"/>
</dbReference>
<dbReference type="InterPro" id="IPR017970">
    <property type="entry name" value="Homeobox_CS"/>
</dbReference>
<dbReference type="InterPro" id="IPR009057">
    <property type="entry name" value="Homeodomain-like_sf"/>
</dbReference>
<dbReference type="PANTHER" id="PTHR45659">
    <property type="entry name" value="HOMEOBOX PROTEIN HOX"/>
    <property type="match status" value="1"/>
</dbReference>
<dbReference type="PANTHER" id="PTHR45659:SF10">
    <property type="entry name" value="HOMEOBOX PROTEIN HOX-A5"/>
    <property type="match status" value="1"/>
</dbReference>
<dbReference type="Pfam" id="PF00046">
    <property type="entry name" value="Homeodomain"/>
    <property type="match status" value="1"/>
</dbReference>
<dbReference type="PRINTS" id="PR00025">
    <property type="entry name" value="ANTENNAPEDIA"/>
</dbReference>
<dbReference type="PRINTS" id="PR00024">
    <property type="entry name" value="HOMEOBOX"/>
</dbReference>
<dbReference type="SMART" id="SM00389">
    <property type="entry name" value="HOX"/>
    <property type="match status" value="1"/>
</dbReference>
<dbReference type="SUPFAM" id="SSF46689">
    <property type="entry name" value="Homeodomain-like"/>
    <property type="match status" value="1"/>
</dbReference>
<dbReference type="PROSITE" id="PS00032">
    <property type="entry name" value="ANTENNAPEDIA"/>
    <property type="match status" value="1"/>
</dbReference>
<dbReference type="PROSITE" id="PS00027">
    <property type="entry name" value="HOMEOBOX_1"/>
    <property type="match status" value="1"/>
</dbReference>
<dbReference type="PROSITE" id="PS50071">
    <property type="entry name" value="HOMEOBOX_2"/>
    <property type="match status" value="1"/>
</dbReference>
<protein>
    <recommendedName>
        <fullName>Homeobox protein Hox-A5</fullName>
    </recommendedName>
</protein>
<reference key="1">
    <citation type="submission" date="2006-08" db="EMBL/GenBank/DDBJ databases">
        <title>Positive selection in transcription factor genes on the human lineage.</title>
        <authorList>
            <person name="Nickel G.C."/>
            <person name="Tefft D.L."/>
            <person name="Trevarthen K."/>
            <person name="Funt J."/>
            <person name="Adams M.D."/>
        </authorList>
    </citation>
    <scope>NUCLEOTIDE SEQUENCE [GENOMIC DNA]</scope>
</reference>
<name>HXA5_LEMCA</name>